<proteinExistence type="evidence at protein level"/>
<keyword id="KW-0963">Cytoplasm</keyword>
<keyword id="KW-1185">Reference proteome</keyword>
<keyword id="KW-0346">Stress response</keyword>
<gene>
    <name type="primary">yocM</name>
    <name type="ordered locus">BSU19260</name>
</gene>
<organism>
    <name type="scientific">Bacillus subtilis (strain 168)</name>
    <dbReference type="NCBI Taxonomy" id="224308"/>
    <lineage>
        <taxon>Bacteria</taxon>
        <taxon>Bacillati</taxon>
        <taxon>Bacillota</taxon>
        <taxon>Bacilli</taxon>
        <taxon>Bacillales</taxon>
        <taxon>Bacillaceae</taxon>
        <taxon>Bacillus</taxon>
    </lineage>
</organism>
<dbReference type="EMBL" id="AF027868">
    <property type="protein sequence ID" value="AAB84479.1"/>
    <property type="molecule type" value="Genomic_DNA"/>
</dbReference>
<dbReference type="EMBL" id="AL009126">
    <property type="protein sequence ID" value="CAB13818.1"/>
    <property type="molecule type" value="Genomic_DNA"/>
</dbReference>
<dbReference type="PIR" id="B69902">
    <property type="entry name" value="B69902"/>
</dbReference>
<dbReference type="RefSeq" id="NP_389808.1">
    <property type="nucleotide sequence ID" value="NC_000964.3"/>
</dbReference>
<dbReference type="RefSeq" id="WP_003231255.1">
    <property type="nucleotide sequence ID" value="NZ_OZ025638.1"/>
</dbReference>
<dbReference type="SMR" id="O34321"/>
<dbReference type="FunCoup" id="O34321">
    <property type="interactions" value="54"/>
</dbReference>
<dbReference type="STRING" id="224308.BSU19260"/>
<dbReference type="PaxDb" id="224308-BSU19260"/>
<dbReference type="EnsemblBacteria" id="CAB13818">
    <property type="protein sequence ID" value="CAB13818"/>
    <property type="gene ID" value="BSU_19260"/>
</dbReference>
<dbReference type="GeneID" id="939587"/>
<dbReference type="KEGG" id="bsu:BSU19260"/>
<dbReference type="PATRIC" id="fig|224308.179.peg.2107"/>
<dbReference type="eggNOG" id="COG0071">
    <property type="taxonomic scope" value="Bacteria"/>
</dbReference>
<dbReference type="InParanoid" id="O34321"/>
<dbReference type="OrthoDB" id="9811615at2"/>
<dbReference type="PhylomeDB" id="O34321"/>
<dbReference type="BioCyc" id="BSUB:BSU19260-MONOMER"/>
<dbReference type="Proteomes" id="UP000001570">
    <property type="component" value="Chromosome"/>
</dbReference>
<dbReference type="GO" id="GO:0005737">
    <property type="term" value="C:cytoplasm"/>
    <property type="evidence" value="ECO:0007669"/>
    <property type="project" value="UniProtKB-SubCell"/>
</dbReference>
<dbReference type="CDD" id="cd06464">
    <property type="entry name" value="ACD_sHsps-like"/>
    <property type="match status" value="1"/>
</dbReference>
<dbReference type="Gene3D" id="2.60.40.790">
    <property type="match status" value="1"/>
</dbReference>
<dbReference type="InterPro" id="IPR002068">
    <property type="entry name" value="A-crystallin/Hsp20_dom"/>
</dbReference>
<dbReference type="InterPro" id="IPR008978">
    <property type="entry name" value="HSP20-like_chaperone"/>
</dbReference>
<dbReference type="Pfam" id="PF00011">
    <property type="entry name" value="HSP20"/>
    <property type="match status" value="1"/>
</dbReference>
<dbReference type="SUPFAM" id="SSF49764">
    <property type="entry name" value="HSP20-like chaperones"/>
    <property type="match status" value="1"/>
</dbReference>
<dbReference type="PROSITE" id="PS01031">
    <property type="entry name" value="SHSP"/>
    <property type="match status" value="1"/>
</dbReference>
<sequence>MDFEKMKQWMEFAQQMYGGDFWKQVFDEDQKTPFMTNGQSPFPFAQQDQRGKGDASFPSMDIVDTVAEVQFLIYLPGYRKQDVHILSYGDYLVVKGQRFSYFNEQDFRQKEGKYGSFEKKIPLSDHLHGKMNAIFKDGILYITIQKDEGQAKTIVIDD</sequence>
<evidence type="ECO:0000255" key="1">
    <source>
        <dbReference type="PROSITE-ProRule" id="PRU00285"/>
    </source>
</evidence>
<evidence type="ECO:0000269" key="2">
    <source>
    </source>
</evidence>
<evidence type="ECO:0000305" key="3"/>
<feature type="chain" id="PRO_0000126049" description="Salt stress-responsive protein YocM">
    <location>
        <begin position="1"/>
        <end position="158"/>
    </location>
</feature>
<feature type="domain" description="sHSP" evidence="1">
    <location>
        <begin position="51"/>
        <end position="158"/>
    </location>
</feature>
<reference key="1">
    <citation type="submission" date="1997-11" db="EMBL/GenBank/DDBJ databases">
        <title>Sequence analysis of the Bacillus subtilis chromosome region between the terC and odhAB loci cloned in a yeast artificial chromosome.</title>
        <authorList>
            <person name="Lapidus A."/>
            <person name="Galleron N."/>
            <person name="Sorokin A."/>
            <person name="Ehrlich S.D."/>
        </authorList>
    </citation>
    <scope>NUCLEOTIDE SEQUENCE [GENOMIC DNA]</scope>
</reference>
<reference key="2">
    <citation type="journal article" date="1997" name="Nature">
        <title>The complete genome sequence of the Gram-positive bacterium Bacillus subtilis.</title>
        <authorList>
            <person name="Kunst F."/>
            <person name="Ogasawara N."/>
            <person name="Moszer I."/>
            <person name="Albertini A.M."/>
            <person name="Alloni G."/>
            <person name="Azevedo V."/>
            <person name="Bertero M.G."/>
            <person name="Bessieres P."/>
            <person name="Bolotin A."/>
            <person name="Borchert S."/>
            <person name="Borriss R."/>
            <person name="Boursier L."/>
            <person name="Brans A."/>
            <person name="Braun M."/>
            <person name="Brignell S.C."/>
            <person name="Bron S."/>
            <person name="Brouillet S."/>
            <person name="Bruschi C.V."/>
            <person name="Caldwell B."/>
            <person name="Capuano V."/>
            <person name="Carter N.M."/>
            <person name="Choi S.-K."/>
            <person name="Codani J.-J."/>
            <person name="Connerton I.F."/>
            <person name="Cummings N.J."/>
            <person name="Daniel R.A."/>
            <person name="Denizot F."/>
            <person name="Devine K.M."/>
            <person name="Duesterhoeft A."/>
            <person name="Ehrlich S.D."/>
            <person name="Emmerson P.T."/>
            <person name="Entian K.-D."/>
            <person name="Errington J."/>
            <person name="Fabret C."/>
            <person name="Ferrari E."/>
            <person name="Foulger D."/>
            <person name="Fritz C."/>
            <person name="Fujita M."/>
            <person name="Fujita Y."/>
            <person name="Fuma S."/>
            <person name="Galizzi A."/>
            <person name="Galleron N."/>
            <person name="Ghim S.-Y."/>
            <person name="Glaser P."/>
            <person name="Goffeau A."/>
            <person name="Golightly E.J."/>
            <person name="Grandi G."/>
            <person name="Guiseppi G."/>
            <person name="Guy B.J."/>
            <person name="Haga K."/>
            <person name="Haiech J."/>
            <person name="Harwood C.R."/>
            <person name="Henaut A."/>
            <person name="Hilbert H."/>
            <person name="Holsappel S."/>
            <person name="Hosono S."/>
            <person name="Hullo M.-F."/>
            <person name="Itaya M."/>
            <person name="Jones L.-M."/>
            <person name="Joris B."/>
            <person name="Karamata D."/>
            <person name="Kasahara Y."/>
            <person name="Klaerr-Blanchard M."/>
            <person name="Klein C."/>
            <person name="Kobayashi Y."/>
            <person name="Koetter P."/>
            <person name="Koningstein G."/>
            <person name="Krogh S."/>
            <person name="Kumano M."/>
            <person name="Kurita K."/>
            <person name="Lapidus A."/>
            <person name="Lardinois S."/>
            <person name="Lauber J."/>
            <person name="Lazarevic V."/>
            <person name="Lee S.-M."/>
            <person name="Levine A."/>
            <person name="Liu H."/>
            <person name="Masuda S."/>
            <person name="Mauel C."/>
            <person name="Medigue C."/>
            <person name="Medina N."/>
            <person name="Mellado R.P."/>
            <person name="Mizuno M."/>
            <person name="Moestl D."/>
            <person name="Nakai S."/>
            <person name="Noback M."/>
            <person name="Noone D."/>
            <person name="O'Reilly M."/>
            <person name="Ogawa K."/>
            <person name="Ogiwara A."/>
            <person name="Oudega B."/>
            <person name="Park S.-H."/>
            <person name="Parro V."/>
            <person name="Pohl T.M."/>
            <person name="Portetelle D."/>
            <person name="Porwollik S."/>
            <person name="Prescott A.M."/>
            <person name="Presecan E."/>
            <person name="Pujic P."/>
            <person name="Purnelle B."/>
            <person name="Rapoport G."/>
            <person name="Rey M."/>
            <person name="Reynolds S."/>
            <person name="Rieger M."/>
            <person name="Rivolta C."/>
            <person name="Rocha E."/>
            <person name="Roche B."/>
            <person name="Rose M."/>
            <person name="Sadaie Y."/>
            <person name="Sato T."/>
            <person name="Scanlan E."/>
            <person name="Schleich S."/>
            <person name="Schroeter R."/>
            <person name="Scoffone F."/>
            <person name="Sekiguchi J."/>
            <person name="Sekowska A."/>
            <person name="Seror S.J."/>
            <person name="Serror P."/>
            <person name="Shin B.-S."/>
            <person name="Soldo B."/>
            <person name="Sorokin A."/>
            <person name="Tacconi E."/>
            <person name="Takagi T."/>
            <person name="Takahashi H."/>
            <person name="Takemaru K."/>
            <person name="Takeuchi M."/>
            <person name="Tamakoshi A."/>
            <person name="Tanaka T."/>
            <person name="Terpstra P."/>
            <person name="Tognoni A."/>
            <person name="Tosato V."/>
            <person name="Uchiyama S."/>
            <person name="Vandenbol M."/>
            <person name="Vannier F."/>
            <person name="Vassarotti A."/>
            <person name="Viari A."/>
            <person name="Wambutt R."/>
            <person name="Wedler E."/>
            <person name="Wedler H."/>
            <person name="Weitzenegger T."/>
            <person name="Winters P."/>
            <person name="Wipat A."/>
            <person name="Yamamoto H."/>
            <person name="Yamane K."/>
            <person name="Yasumoto K."/>
            <person name="Yata K."/>
            <person name="Yoshida K."/>
            <person name="Yoshikawa H.-F."/>
            <person name="Zumstein E."/>
            <person name="Yoshikawa H."/>
            <person name="Danchin A."/>
        </authorList>
    </citation>
    <scope>NUCLEOTIDE SEQUENCE [LARGE SCALE GENOMIC DNA]</scope>
    <source>
        <strain>168</strain>
    </source>
</reference>
<reference key="3">
    <citation type="journal article" date="2019" name="Mol. Microbiol.">
        <title>YocM a small heat shock protein can protect Bacillus subtilis cells during salt stress.</title>
        <authorList>
            <person name="Hantke I."/>
            <person name="Schaefer H."/>
            <person name="Janczikowski A."/>
            <person name="Turgay K."/>
        </authorList>
    </citation>
    <scope>FUNCTION</scope>
    <scope>SUBUNIT</scope>
    <scope>SUBCELLULAR LOCATION</scope>
    <scope>INDUCTION</scope>
    <scope>DISRUPTION PHENOTYPE</scope>
</reference>
<accession>O34321</accession>
<protein>
    <recommendedName>
        <fullName evidence="3">Salt stress-responsive protein YocM</fullName>
    </recommendedName>
</protein>
<comment type="function">
    <text evidence="2">Part of the cellular protein quality control system with a specific role in salt stress response. May facilitate protein homeostasis, together with chemical chaperones that accumulate during the salt stress response. Increased levels of YocM protects against both heat and salt stress. In vitro, displays an unusual aggregase chaperone activity.</text>
</comment>
<comment type="subunit">
    <text evidence="2">Forms homodimers, homotetramers and higher oligomers.</text>
</comment>
<comment type="subcellular location">
    <subcellularLocation>
        <location evidence="3">Cytoplasm</location>
    </subcellularLocation>
    <text evidence="2">Localizes to stress-induced intracellular protein aggregates.</text>
</comment>
<comment type="induction">
    <text evidence="2">Induced upon salt stress conditions.</text>
</comment>
<comment type="disruption phenotype">
    <text evidence="2">Deletion of the gene increases sensitivity toward salt stress.</text>
</comment>
<comment type="similarity">
    <text evidence="1">Belongs to the small heat shock protein (HSP20) family.</text>
</comment>
<name>SLTSR_BACSU</name>